<feature type="chain" id="PRO_1000120698" description="Small ribosomal subunit protein bS6">
    <location>
        <begin position="1"/>
        <end position="124"/>
    </location>
</feature>
<comment type="function">
    <text evidence="1">Binds together with bS18 to 16S ribosomal RNA.</text>
</comment>
<comment type="similarity">
    <text evidence="1">Belongs to the bacterial ribosomal protein bS6 family.</text>
</comment>
<protein>
    <recommendedName>
        <fullName evidence="1">Small ribosomal subunit protein bS6</fullName>
    </recommendedName>
    <alternativeName>
        <fullName evidence="2">30S ribosomal protein S6</fullName>
    </alternativeName>
</protein>
<accession>B3GY59</accession>
<keyword id="KW-0687">Ribonucleoprotein</keyword>
<keyword id="KW-0689">Ribosomal protein</keyword>
<keyword id="KW-0694">RNA-binding</keyword>
<keyword id="KW-0699">rRNA-binding</keyword>
<proteinExistence type="inferred from homology"/>
<name>RS6_ACTP7</name>
<sequence>MRHYEIVFMVHPDQSEQVPAMIERYTASVKEAGGQVHRLEDWGRRQLAYPINKLHKAHYVLMNVEAPQSVIDELETNFRYNDAVLRNLIVHTKAAVTEASPMVKAKESKVAEAVAEVESEEAGE</sequence>
<dbReference type="EMBL" id="CP001091">
    <property type="protein sequence ID" value="ACE61882.1"/>
    <property type="molecule type" value="Genomic_DNA"/>
</dbReference>
<dbReference type="RefSeq" id="WP_005598107.1">
    <property type="nucleotide sequence ID" value="NC_010939.1"/>
</dbReference>
<dbReference type="SMR" id="B3GY59"/>
<dbReference type="GeneID" id="92744281"/>
<dbReference type="KEGG" id="apa:APP7_1230"/>
<dbReference type="HOGENOM" id="CLU_113441_6_1_6"/>
<dbReference type="Proteomes" id="UP000001226">
    <property type="component" value="Chromosome"/>
</dbReference>
<dbReference type="GO" id="GO:0022627">
    <property type="term" value="C:cytosolic small ribosomal subunit"/>
    <property type="evidence" value="ECO:0007669"/>
    <property type="project" value="TreeGrafter"/>
</dbReference>
<dbReference type="GO" id="GO:0070181">
    <property type="term" value="F:small ribosomal subunit rRNA binding"/>
    <property type="evidence" value="ECO:0007669"/>
    <property type="project" value="TreeGrafter"/>
</dbReference>
<dbReference type="GO" id="GO:0003735">
    <property type="term" value="F:structural constituent of ribosome"/>
    <property type="evidence" value="ECO:0007669"/>
    <property type="project" value="InterPro"/>
</dbReference>
<dbReference type="GO" id="GO:0006412">
    <property type="term" value="P:translation"/>
    <property type="evidence" value="ECO:0007669"/>
    <property type="project" value="UniProtKB-UniRule"/>
</dbReference>
<dbReference type="CDD" id="cd00473">
    <property type="entry name" value="bS6"/>
    <property type="match status" value="1"/>
</dbReference>
<dbReference type="FunFam" id="3.30.70.60:FF:000003">
    <property type="entry name" value="30S ribosomal protein S6"/>
    <property type="match status" value="1"/>
</dbReference>
<dbReference type="Gene3D" id="3.30.70.60">
    <property type="match status" value="1"/>
</dbReference>
<dbReference type="HAMAP" id="MF_00360">
    <property type="entry name" value="Ribosomal_bS6"/>
    <property type="match status" value="1"/>
</dbReference>
<dbReference type="InterPro" id="IPR000529">
    <property type="entry name" value="Ribosomal_bS6"/>
</dbReference>
<dbReference type="InterPro" id="IPR020815">
    <property type="entry name" value="Ribosomal_bS6_CS"/>
</dbReference>
<dbReference type="InterPro" id="IPR035980">
    <property type="entry name" value="Ribosomal_bS6_sf"/>
</dbReference>
<dbReference type="InterPro" id="IPR020814">
    <property type="entry name" value="Ribosomal_S6_plastid/chlpt"/>
</dbReference>
<dbReference type="InterPro" id="IPR014717">
    <property type="entry name" value="Transl_elong_EF1B/ribsomal_bS6"/>
</dbReference>
<dbReference type="NCBIfam" id="TIGR00166">
    <property type="entry name" value="S6"/>
    <property type="match status" value="1"/>
</dbReference>
<dbReference type="PANTHER" id="PTHR21011">
    <property type="entry name" value="MITOCHONDRIAL 28S RIBOSOMAL PROTEIN S6"/>
    <property type="match status" value="1"/>
</dbReference>
<dbReference type="PANTHER" id="PTHR21011:SF1">
    <property type="entry name" value="SMALL RIBOSOMAL SUBUNIT PROTEIN BS6M"/>
    <property type="match status" value="1"/>
</dbReference>
<dbReference type="Pfam" id="PF01250">
    <property type="entry name" value="Ribosomal_S6"/>
    <property type="match status" value="1"/>
</dbReference>
<dbReference type="SUPFAM" id="SSF54995">
    <property type="entry name" value="Ribosomal protein S6"/>
    <property type="match status" value="1"/>
</dbReference>
<dbReference type="PROSITE" id="PS01048">
    <property type="entry name" value="RIBOSOMAL_S6"/>
    <property type="match status" value="1"/>
</dbReference>
<gene>
    <name evidence="1" type="primary">rpsF</name>
    <name type="ordered locus">APP7_1230</name>
</gene>
<reference key="1">
    <citation type="submission" date="2008-06" db="EMBL/GenBank/DDBJ databases">
        <title>Genome and proteome analysis of A. pleuropneumoniae serotype 7.</title>
        <authorList>
            <person name="Linke B."/>
            <person name="Buettner F."/>
            <person name="Martinez-Arias R."/>
            <person name="Goesmann A."/>
            <person name="Baltes N."/>
            <person name="Tegetmeyer H."/>
            <person name="Singh M."/>
            <person name="Gerlach G.F."/>
        </authorList>
    </citation>
    <scope>NUCLEOTIDE SEQUENCE [LARGE SCALE GENOMIC DNA]</scope>
    <source>
        <strain>AP76</strain>
    </source>
</reference>
<organism>
    <name type="scientific">Actinobacillus pleuropneumoniae serotype 7 (strain AP76)</name>
    <dbReference type="NCBI Taxonomy" id="537457"/>
    <lineage>
        <taxon>Bacteria</taxon>
        <taxon>Pseudomonadati</taxon>
        <taxon>Pseudomonadota</taxon>
        <taxon>Gammaproteobacteria</taxon>
        <taxon>Pasteurellales</taxon>
        <taxon>Pasteurellaceae</taxon>
        <taxon>Actinobacillus</taxon>
    </lineage>
</organism>
<evidence type="ECO:0000255" key="1">
    <source>
        <dbReference type="HAMAP-Rule" id="MF_00360"/>
    </source>
</evidence>
<evidence type="ECO:0000305" key="2"/>